<protein>
    <recommendedName>
        <fullName>Probable phenylalanine--tRNA ligase alpha subunit</fullName>
        <ecNumber>6.1.1.20</ecNumber>
    </recommendedName>
    <alternativeName>
        <fullName>Phenylalanyl-tRNA synthetase alpha subunit</fullName>
        <shortName>PheRS</shortName>
    </alternativeName>
</protein>
<keyword id="KW-0030">Aminoacyl-tRNA synthetase</keyword>
<keyword id="KW-0067">ATP-binding</keyword>
<keyword id="KW-0963">Cytoplasm</keyword>
<keyword id="KW-0436">Ligase</keyword>
<keyword id="KW-0460">Magnesium</keyword>
<keyword id="KW-0479">Metal-binding</keyword>
<keyword id="KW-0547">Nucleotide-binding</keyword>
<keyword id="KW-0648">Protein biosynthesis</keyword>
<keyword id="KW-1185">Reference proteome</keyword>
<accession>C4V6K5</accession>
<organism>
    <name type="scientific">Vairimorpha ceranae (strain BRL01)</name>
    <name type="common">Microsporidian parasite</name>
    <name type="synonym">Nosema ceranae</name>
    <dbReference type="NCBI Taxonomy" id="578460"/>
    <lineage>
        <taxon>Eukaryota</taxon>
        <taxon>Fungi</taxon>
        <taxon>Fungi incertae sedis</taxon>
        <taxon>Microsporidia</taxon>
        <taxon>Nosematidae</taxon>
        <taxon>Vairimorpha</taxon>
    </lineage>
</organism>
<feature type="chain" id="PRO_0000388409" description="Probable phenylalanine--tRNA ligase alpha subunit">
    <location>
        <begin position="1"/>
        <end position="474"/>
    </location>
</feature>
<feature type="region of interest" description="Contains the major tRNA-Phe binding sites" evidence="1">
    <location>
        <begin position="1"/>
        <end position="150"/>
    </location>
</feature>
<feature type="binding site" evidence="3">
    <location>
        <position position="308"/>
    </location>
    <ligand>
        <name>L-phenylalanine</name>
        <dbReference type="ChEBI" id="CHEBI:58095"/>
    </ligand>
</feature>
<feature type="binding site" evidence="3">
    <location>
        <begin position="350"/>
        <end position="352"/>
    </location>
    <ligand>
        <name>L-phenylalanine</name>
        <dbReference type="ChEBI" id="CHEBI:58095"/>
    </ligand>
</feature>
<feature type="binding site" evidence="3">
    <location>
        <position position="390"/>
    </location>
    <ligand>
        <name>L-phenylalanine</name>
        <dbReference type="ChEBI" id="CHEBI:58095"/>
    </ligand>
</feature>
<feature type="binding site" evidence="2">
    <location>
        <position position="392"/>
    </location>
    <ligand>
        <name>Mg(2+)</name>
        <dbReference type="ChEBI" id="CHEBI:18420"/>
        <note>shared with beta subunit</note>
    </ligand>
</feature>
<feature type="binding site" evidence="3">
    <location>
        <position position="416"/>
    </location>
    <ligand>
        <name>L-phenylalanine</name>
        <dbReference type="ChEBI" id="CHEBI:58095"/>
    </ligand>
</feature>
<sequence>MSLSQKILELLKNTETIKSTDIDVRSNELYPVLLSLASKEIISFTFKEQIIYKLTEEGESILKNGSYEFNLYNSIGDNGMELLEVDKYNLGKVNAFKNKWIKKVGDKVYKSADNVEDNVKNMLNNVTNKIYQKEEISLLKKRKLIYQAKEVVYFIKKGPLYGKDSDNITELISKMVISGEYKHLNFKPYNFNTKGNIQSQGALHPLMKVREEIRKIFLEMGFNEMTTNKFVESSFWNFDTLFQPQNHPSRDAHDTFFMKTPSTTSYIPIDYMKMIKKIHSVGDFDSDGHFSDWDIKEAEKNILRSHTTACSTRTMLEIAKGEFISAKLFSIDRVFRNEALDATHLAEFNQVEGLIVAKGLTLGNLMGYLKRFFEKLGITDIKFKPAYNPYTEPSMEVFGYHKGLKKWIEVGNSGMFRPEVLRPMGFDKDVRAIGFGLSLERPTMIKYGISNIRDLIGPKVDIEFIKKSEMCFFN</sequence>
<proteinExistence type="inferred from homology"/>
<name>SYFA_VAIC1</name>
<gene>
    <name type="ORF">NCER_100038</name>
</gene>
<reference key="1">
    <citation type="journal article" date="2009" name="PLoS Pathog.">
        <title>Genomic analyses of the microsporidian Nosema ceranae, an emergent pathogen of honey bees.</title>
        <authorList>
            <person name="Cornman R.S."/>
            <person name="Chen Y.P."/>
            <person name="Schatz M.C."/>
            <person name="Street C."/>
            <person name="Zhao Y."/>
            <person name="Desany B."/>
            <person name="Egholm M."/>
            <person name="Hutchison S."/>
            <person name="Pettis J.S."/>
            <person name="Lipkin W.I."/>
            <person name="Evans J.D."/>
        </authorList>
    </citation>
    <scope>NUCLEOTIDE SEQUENCE [LARGE SCALE GENOMIC DNA]</scope>
    <source>
        <strain>BRL01</strain>
    </source>
</reference>
<dbReference type="EC" id="6.1.1.20"/>
<dbReference type="EMBL" id="ACOL01000001">
    <property type="protein sequence ID" value="EEQ83176.1"/>
    <property type="molecule type" value="Genomic_DNA"/>
</dbReference>
<dbReference type="RefSeq" id="XP_002996847.1">
    <property type="nucleotide sequence ID" value="XM_002996801.1"/>
</dbReference>
<dbReference type="SMR" id="C4V6K5"/>
<dbReference type="FunCoup" id="C4V6K5">
    <property type="interactions" value="267"/>
</dbReference>
<dbReference type="STRING" id="578460.C4V6K5"/>
<dbReference type="KEGG" id="nce:NCER_100038"/>
<dbReference type="VEuPathDB" id="MicrosporidiaDB:NCER_100038"/>
<dbReference type="HOGENOM" id="CLU_025086_2_2_1"/>
<dbReference type="InParanoid" id="C4V6K5"/>
<dbReference type="OMA" id="QIEGWVM"/>
<dbReference type="OrthoDB" id="6955at6029"/>
<dbReference type="Proteomes" id="UP000009082">
    <property type="component" value="Unassembled WGS sequence"/>
</dbReference>
<dbReference type="GO" id="GO:0005829">
    <property type="term" value="C:cytosol"/>
    <property type="evidence" value="ECO:0007669"/>
    <property type="project" value="TreeGrafter"/>
</dbReference>
<dbReference type="GO" id="GO:0009328">
    <property type="term" value="C:phenylalanine-tRNA ligase complex"/>
    <property type="evidence" value="ECO:0007669"/>
    <property type="project" value="TreeGrafter"/>
</dbReference>
<dbReference type="GO" id="GO:0005524">
    <property type="term" value="F:ATP binding"/>
    <property type="evidence" value="ECO:0007669"/>
    <property type="project" value="UniProtKB-KW"/>
</dbReference>
<dbReference type="GO" id="GO:0000287">
    <property type="term" value="F:magnesium ion binding"/>
    <property type="evidence" value="ECO:0000250"/>
    <property type="project" value="UniProtKB"/>
</dbReference>
<dbReference type="GO" id="GO:0004826">
    <property type="term" value="F:phenylalanine-tRNA ligase activity"/>
    <property type="evidence" value="ECO:0007669"/>
    <property type="project" value="UniProtKB-EC"/>
</dbReference>
<dbReference type="GO" id="GO:0000049">
    <property type="term" value="F:tRNA binding"/>
    <property type="evidence" value="ECO:0007669"/>
    <property type="project" value="InterPro"/>
</dbReference>
<dbReference type="GO" id="GO:0006432">
    <property type="term" value="P:phenylalanyl-tRNA aminoacylation"/>
    <property type="evidence" value="ECO:0007669"/>
    <property type="project" value="InterPro"/>
</dbReference>
<dbReference type="CDD" id="cd00496">
    <property type="entry name" value="PheRS_alpha_core"/>
    <property type="match status" value="1"/>
</dbReference>
<dbReference type="FunFam" id="3.30.930.10:FF:000178">
    <property type="entry name" value="Phenylalanyl-tRNA synthetase subunit alpha"/>
    <property type="match status" value="1"/>
</dbReference>
<dbReference type="Gene3D" id="1.10.10.2320">
    <property type="match status" value="1"/>
</dbReference>
<dbReference type="Gene3D" id="1.10.10.2330">
    <property type="match status" value="1"/>
</dbReference>
<dbReference type="Gene3D" id="3.30.1370.240">
    <property type="match status" value="1"/>
</dbReference>
<dbReference type="Gene3D" id="3.30.930.10">
    <property type="entry name" value="Bira Bifunctional Protein, Domain 2"/>
    <property type="match status" value="1"/>
</dbReference>
<dbReference type="InterPro" id="IPR006195">
    <property type="entry name" value="aa-tRNA-synth_II"/>
</dbReference>
<dbReference type="InterPro" id="IPR045864">
    <property type="entry name" value="aa-tRNA-synth_II/BPL/LPL"/>
</dbReference>
<dbReference type="InterPro" id="IPR004529">
    <property type="entry name" value="Phe-tRNA-synth_IIc_asu"/>
</dbReference>
<dbReference type="InterPro" id="IPR002319">
    <property type="entry name" value="Phenylalanyl-tRNA_Synthase"/>
</dbReference>
<dbReference type="InterPro" id="IPR040725">
    <property type="entry name" value="PheRS_DBD3"/>
</dbReference>
<dbReference type="NCBIfam" id="TIGR00468">
    <property type="entry name" value="pheS"/>
    <property type="match status" value="1"/>
</dbReference>
<dbReference type="NCBIfam" id="NF003210">
    <property type="entry name" value="PRK04172.1"/>
    <property type="match status" value="1"/>
</dbReference>
<dbReference type="PANTHER" id="PTHR11538:SF40">
    <property type="entry name" value="PHENYLALANINE--TRNA LIGASE ALPHA SUBUNIT"/>
    <property type="match status" value="1"/>
</dbReference>
<dbReference type="PANTHER" id="PTHR11538">
    <property type="entry name" value="PHENYLALANYL-TRNA SYNTHETASE"/>
    <property type="match status" value="1"/>
</dbReference>
<dbReference type="Pfam" id="PF18553">
    <property type="entry name" value="PheRS_DBD3"/>
    <property type="match status" value="1"/>
</dbReference>
<dbReference type="Pfam" id="PF01409">
    <property type="entry name" value="tRNA-synt_2d"/>
    <property type="match status" value="1"/>
</dbReference>
<dbReference type="SUPFAM" id="SSF55681">
    <property type="entry name" value="Class II aaRS and biotin synthetases"/>
    <property type="match status" value="1"/>
</dbReference>
<dbReference type="PROSITE" id="PS50862">
    <property type="entry name" value="AA_TRNA_LIGASE_II"/>
    <property type="match status" value="1"/>
</dbReference>
<evidence type="ECO:0000250" key="1"/>
<evidence type="ECO:0000250" key="2">
    <source>
        <dbReference type="UniProtKB" id="A5K9S0"/>
    </source>
</evidence>
<evidence type="ECO:0000250" key="3">
    <source>
        <dbReference type="UniProtKB" id="Q9Y285"/>
    </source>
</evidence>
<evidence type="ECO:0000305" key="4"/>
<comment type="catalytic activity">
    <reaction>
        <text>tRNA(Phe) + L-phenylalanine + ATP = L-phenylalanyl-tRNA(Phe) + AMP + diphosphate + H(+)</text>
        <dbReference type="Rhea" id="RHEA:19413"/>
        <dbReference type="Rhea" id="RHEA-COMP:9668"/>
        <dbReference type="Rhea" id="RHEA-COMP:9699"/>
        <dbReference type="ChEBI" id="CHEBI:15378"/>
        <dbReference type="ChEBI" id="CHEBI:30616"/>
        <dbReference type="ChEBI" id="CHEBI:33019"/>
        <dbReference type="ChEBI" id="CHEBI:58095"/>
        <dbReference type="ChEBI" id="CHEBI:78442"/>
        <dbReference type="ChEBI" id="CHEBI:78531"/>
        <dbReference type="ChEBI" id="CHEBI:456215"/>
        <dbReference type="EC" id="6.1.1.20"/>
    </reaction>
</comment>
<comment type="cofactor">
    <cofactor evidence="2">
        <name>Mg(2+)</name>
        <dbReference type="ChEBI" id="CHEBI:18420"/>
    </cofactor>
</comment>
<comment type="subunit">
    <text evidence="1">Tetramer of two alpha and two beta subunits.</text>
</comment>
<comment type="subcellular location">
    <subcellularLocation>
        <location evidence="1">Cytoplasm</location>
    </subcellularLocation>
</comment>
<comment type="similarity">
    <text evidence="4">Belongs to the class-II aminoacyl-tRNA synthetase family. Phe-tRNA synthetase alpha subunit type 2 subfamily.</text>
</comment>